<accession>Q5JI38</accession>
<name>APAUH_THEKO</name>
<proteinExistence type="evidence at protein level"/>
<dbReference type="EC" id="3.5.3.24"/>
<dbReference type="EC" id="3.5.3.11"/>
<dbReference type="EMBL" id="AP006878">
    <property type="protein sequence ID" value="BAD85071.1"/>
    <property type="molecule type" value="Genomic_DNA"/>
</dbReference>
<dbReference type="RefSeq" id="WP_011249833.1">
    <property type="nucleotide sequence ID" value="NC_006624.1"/>
</dbReference>
<dbReference type="SMR" id="Q5JI38"/>
<dbReference type="FunCoup" id="Q5JI38">
    <property type="interactions" value="76"/>
</dbReference>
<dbReference type="STRING" id="69014.TK0882"/>
<dbReference type="EnsemblBacteria" id="BAD85071">
    <property type="protein sequence ID" value="BAD85071"/>
    <property type="gene ID" value="TK0882"/>
</dbReference>
<dbReference type="GeneID" id="78447397"/>
<dbReference type="KEGG" id="tko:TK0882"/>
<dbReference type="PATRIC" id="fig|69014.16.peg.861"/>
<dbReference type="eggNOG" id="arCOG01700">
    <property type="taxonomic scope" value="Archaea"/>
</dbReference>
<dbReference type="HOGENOM" id="CLU_039478_0_2_2"/>
<dbReference type="InParanoid" id="Q5JI38"/>
<dbReference type="OrthoDB" id="7186at2157"/>
<dbReference type="PhylomeDB" id="Q5JI38"/>
<dbReference type="BioCyc" id="MetaCyc:MONOMER-16735"/>
<dbReference type="BRENDA" id="3.5.3.24">
    <property type="organism ID" value="5246"/>
</dbReference>
<dbReference type="UniPathway" id="UPA00248"/>
<dbReference type="Proteomes" id="UP000000536">
    <property type="component" value="Chromosome"/>
</dbReference>
<dbReference type="GO" id="GO:0005737">
    <property type="term" value="C:cytoplasm"/>
    <property type="evidence" value="ECO:0007669"/>
    <property type="project" value="UniProtKB-SubCell"/>
</dbReference>
<dbReference type="GO" id="GO:0008783">
    <property type="term" value="F:agmatinase activity"/>
    <property type="evidence" value="ECO:0000315"/>
    <property type="project" value="UniProtKB"/>
</dbReference>
<dbReference type="GO" id="GO:0043920">
    <property type="term" value="F:aminopropylagmatine ureohydrolase activity"/>
    <property type="evidence" value="ECO:0007669"/>
    <property type="project" value="UniProtKB-EC"/>
</dbReference>
<dbReference type="GO" id="GO:0016813">
    <property type="term" value="F:hydrolase activity, acting on carbon-nitrogen (but not peptide) bonds, in linear amidines"/>
    <property type="evidence" value="ECO:0000315"/>
    <property type="project" value="UniProtKB"/>
</dbReference>
<dbReference type="GO" id="GO:0046872">
    <property type="term" value="F:metal ion binding"/>
    <property type="evidence" value="ECO:0007669"/>
    <property type="project" value="UniProtKB-KW"/>
</dbReference>
<dbReference type="GO" id="GO:0033389">
    <property type="term" value="P:putrescine biosynthetic process from arginine, via agmatine"/>
    <property type="evidence" value="ECO:0000318"/>
    <property type="project" value="GO_Central"/>
</dbReference>
<dbReference type="GO" id="GO:0008295">
    <property type="term" value="P:spermidine biosynthetic process"/>
    <property type="evidence" value="ECO:0000315"/>
    <property type="project" value="UniProtKB"/>
</dbReference>
<dbReference type="CDD" id="cd11593">
    <property type="entry name" value="Agmatinase-like_2"/>
    <property type="match status" value="1"/>
</dbReference>
<dbReference type="FunFam" id="3.40.800.10:FF:000019">
    <property type="entry name" value="Agmatinase"/>
    <property type="match status" value="1"/>
</dbReference>
<dbReference type="Gene3D" id="3.40.800.10">
    <property type="entry name" value="Ureohydrolase domain"/>
    <property type="match status" value="1"/>
</dbReference>
<dbReference type="InterPro" id="IPR005925">
    <property type="entry name" value="Agmatinase-rel"/>
</dbReference>
<dbReference type="InterPro" id="IPR006035">
    <property type="entry name" value="Ureohydrolase"/>
</dbReference>
<dbReference type="InterPro" id="IPR023696">
    <property type="entry name" value="Ureohydrolase_dom_sf"/>
</dbReference>
<dbReference type="NCBIfam" id="TIGR01230">
    <property type="entry name" value="agmatinase"/>
    <property type="match status" value="1"/>
</dbReference>
<dbReference type="PANTHER" id="PTHR11358">
    <property type="entry name" value="ARGINASE/AGMATINASE"/>
    <property type="match status" value="1"/>
</dbReference>
<dbReference type="PANTHER" id="PTHR11358:SF26">
    <property type="entry name" value="GUANIDINO ACID HYDROLASE, MITOCHONDRIAL"/>
    <property type="match status" value="1"/>
</dbReference>
<dbReference type="Pfam" id="PF00491">
    <property type="entry name" value="Arginase"/>
    <property type="match status" value="1"/>
</dbReference>
<dbReference type="PIRSF" id="PIRSF036979">
    <property type="entry name" value="Arginase"/>
    <property type="match status" value="1"/>
</dbReference>
<dbReference type="SUPFAM" id="SSF52768">
    <property type="entry name" value="Arginase/deacetylase"/>
    <property type="match status" value="1"/>
</dbReference>
<dbReference type="PROSITE" id="PS51409">
    <property type="entry name" value="ARGINASE_2"/>
    <property type="match status" value="1"/>
</dbReference>
<evidence type="ECO:0000250" key="1"/>
<evidence type="ECO:0000255" key="2">
    <source>
        <dbReference type="PROSITE-ProRule" id="PRU00742"/>
    </source>
</evidence>
<evidence type="ECO:0000269" key="3">
    <source>
    </source>
</evidence>
<evidence type="ECO:0000305" key="4"/>
<evidence type="ECO:0000305" key="5">
    <source>
    </source>
</evidence>
<protein>
    <recommendedName>
        <fullName>N(1)-aminopropylagmatine ureohydrolase</fullName>
        <shortName evidence="4">APA ureohydrolase</shortName>
        <shortName evidence="4">APAUH</shortName>
        <ecNumber>3.5.3.24</ecNumber>
    </recommendedName>
    <alternativeName>
        <fullName>Agmatinase</fullName>
        <ecNumber>3.5.3.11</ecNumber>
    </alternativeName>
    <alternativeName>
        <fullName>Protein SpeB homolog</fullName>
    </alternativeName>
</protein>
<comment type="function">
    <text evidence="3">Involved in the biosynthesis of polyamines which are thought to support the growth of thermophilic microorganisms under high-temperature conditions. It seems that long-chain and branched-chain of polyamines effectively stabilize DNA and RNA, respectively. Catalyzes the decarboxylation of N1-(3-aminopropyl)agmatine to yield spermidine and urea. It can also use agmatine to yield putrescine.</text>
</comment>
<comment type="catalytic activity">
    <reaction evidence="3">
        <text>N(1)-(3-aminopropyl)agmatine + H2O = urea + spermidine</text>
        <dbReference type="Rhea" id="RHEA:35827"/>
        <dbReference type="ChEBI" id="CHEBI:15377"/>
        <dbReference type="ChEBI" id="CHEBI:16199"/>
        <dbReference type="ChEBI" id="CHEBI:57834"/>
        <dbReference type="ChEBI" id="CHEBI:64335"/>
        <dbReference type="EC" id="3.5.3.24"/>
    </reaction>
</comment>
<comment type="catalytic activity">
    <reaction evidence="3">
        <text>agmatine + H2O = urea + putrescine</text>
        <dbReference type="Rhea" id="RHEA:13929"/>
        <dbReference type="ChEBI" id="CHEBI:15377"/>
        <dbReference type="ChEBI" id="CHEBI:16199"/>
        <dbReference type="ChEBI" id="CHEBI:58145"/>
        <dbReference type="ChEBI" id="CHEBI:326268"/>
        <dbReference type="EC" id="3.5.3.11"/>
    </reaction>
</comment>
<comment type="cofactor">
    <cofactor evidence="2">
        <name>Mn(2+)</name>
        <dbReference type="ChEBI" id="CHEBI:29035"/>
    </cofactor>
    <text evidence="2">Binds 2 manganese ions per subunit.</text>
</comment>
<comment type="biophysicochemical properties">
    <kinetics>
        <KM evidence="3">6.42 uM for N(1)-aminopropylagmatine (at pH 7.5 and 70 degrees Celsius)</KM>
        <KM evidence="3">486 uM for agmatine (at pH 7.5 and 70 degrees Celsius)</KM>
        <text>kcat is 1.86 sec(-1) for ureohydrolase activity with agmatine as substrate (at pH 7.5 and 70 degrees Celsius). kcat is 1.01 sec(-1) for ureohydrolase activity with N(1)-aminopropylagmatine as substrate (at pH 7.5 and 70 degrees Celsius).</text>
    </kinetics>
    <temperatureDependence>
        <text evidence="3">Optimum temperature is 90 degrees Celsius.</text>
    </temperatureDependence>
</comment>
<comment type="pathway">
    <text>Amine and polyamine biosynthesis; spermidine biosynthesis.</text>
</comment>
<comment type="subcellular location">
    <subcellularLocation>
        <location evidence="3">Cytoplasm</location>
    </subcellularLocation>
</comment>
<comment type="disruption phenotype">
    <text evidence="3">Cells lacking this gene show to a decreased growth rate at 85 degrees Celsius and a severe growth defect at 93 degrees Celsius. This mutant accumulates N1-aminopropylagmatine and agmatine at 85 degrees Celsius.</text>
</comment>
<comment type="miscellaneous">
    <text evidence="5">In T.kodakarensis, two kinds of synthetic pathways from agmatine to spermidine are predicted. One is the pathway via putrescine (pathway I), and the other is that via N1-aminopropylagmatine (pathway II) (PubMed:20675472).</text>
</comment>
<comment type="similarity">
    <text evidence="2">Belongs to the arginase family.</text>
</comment>
<organism>
    <name type="scientific">Thermococcus kodakarensis (strain ATCC BAA-918 / JCM 12380 / KOD1)</name>
    <name type="common">Pyrococcus kodakaraensis (strain KOD1)</name>
    <dbReference type="NCBI Taxonomy" id="69014"/>
    <lineage>
        <taxon>Archaea</taxon>
        <taxon>Methanobacteriati</taxon>
        <taxon>Methanobacteriota</taxon>
        <taxon>Thermococci</taxon>
        <taxon>Thermococcales</taxon>
        <taxon>Thermococcaceae</taxon>
        <taxon>Thermococcus</taxon>
    </lineage>
</organism>
<keyword id="KW-0963">Cytoplasm</keyword>
<keyword id="KW-0378">Hydrolase</keyword>
<keyword id="KW-0464">Manganese</keyword>
<keyword id="KW-0479">Metal-binding</keyword>
<keyword id="KW-0620">Polyamine biosynthesis</keyword>
<keyword id="KW-1185">Reference proteome</keyword>
<keyword id="KW-0745">Spermidine biosynthesis</keyword>
<sequence>MEFLYTYETLKLEFPLVEPEKARFILLGVPFDGTTSYKAGARFGPTLIRQATLNLESYILDYDLDIAELPIADIGDIAVVAGDPRKTADRVRETLEELKKANPKAIPILLGGEHSQTLGAVEALKPASYVVFDAHLDLRNSYEDNPYNHACVARRISELGVKEAIFGIRSGTKEEVDFARERDIPWVHARDYSFDAFVDLVEALPEPVYLSIDIDVFDLSMVPSTGTPEAGGLRFWEVVEAIEWLVEKKEIAGFDIMEVAGEKLGDPTALTAAKLLFYSIGAMAKFGR</sequence>
<gene>
    <name type="ordered locus">TK0882</name>
</gene>
<reference key="1">
    <citation type="journal article" date="2005" name="Genome Res.">
        <title>Complete genome sequence of the hyperthermophilic archaeon Thermococcus kodakaraensis KOD1 and comparison with Pyrococcus genomes.</title>
        <authorList>
            <person name="Fukui T."/>
            <person name="Atomi H."/>
            <person name="Kanai T."/>
            <person name="Matsumi R."/>
            <person name="Fujiwara S."/>
            <person name="Imanaka T."/>
        </authorList>
    </citation>
    <scope>NUCLEOTIDE SEQUENCE [LARGE SCALE GENOMIC DNA]</scope>
    <source>
        <strain>ATCC BAA-918 / JCM 12380 / KOD1</strain>
    </source>
</reference>
<reference key="2">
    <citation type="journal article" date="2010" name="J. Bacteriol.">
        <title>Dual biosynthesis pathway for longer-chain polyamines in the hyperthermophilic archaeon Thermococcus kodakarensis.</title>
        <authorList>
            <person name="Morimoto N."/>
            <person name="Fukuda W."/>
            <person name="Nakajima N."/>
            <person name="Masuda T."/>
            <person name="Terui Y."/>
            <person name="Kanai T."/>
            <person name="Oshima T."/>
            <person name="Imanaka T."/>
            <person name="Fujiwara S."/>
        </authorList>
    </citation>
    <scope>FUNCTION</scope>
    <scope>CATALYTIC ACTIVITY</scope>
    <scope>DISRUPTION PHENOTYPE</scope>
    <scope>BIOPHYSICOCHEMICAL PROPERTIES</scope>
    <scope>SUBCELLULAR LOCATION</scope>
    <source>
        <strain>ATCC BAA-918 / JCM 12380 / KOD1</strain>
    </source>
</reference>
<feature type="chain" id="PRO_0000429862" description="N(1)-aminopropylagmatine ureohydrolase">
    <location>
        <begin position="1"/>
        <end position="288"/>
    </location>
</feature>
<feature type="binding site" evidence="2">
    <location>
        <position position="114"/>
    </location>
    <ligand>
        <name>Mn(2+)</name>
        <dbReference type="ChEBI" id="CHEBI:29035"/>
        <label>1</label>
    </ligand>
</feature>
<feature type="binding site" evidence="2">
    <location>
        <position position="133"/>
    </location>
    <ligand>
        <name>Mn(2+)</name>
        <dbReference type="ChEBI" id="CHEBI:29035"/>
        <label>1</label>
    </ligand>
</feature>
<feature type="binding site" evidence="2">
    <location>
        <position position="133"/>
    </location>
    <ligand>
        <name>Mn(2+)</name>
        <dbReference type="ChEBI" id="CHEBI:29035"/>
        <label>2</label>
    </ligand>
</feature>
<feature type="binding site" evidence="2">
    <location>
        <position position="135"/>
    </location>
    <ligand>
        <name>Mn(2+)</name>
        <dbReference type="ChEBI" id="CHEBI:29035"/>
        <label>2</label>
    </ligand>
</feature>
<feature type="binding site" evidence="2">
    <location>
        <position position="137"/>
    </location>
    <ligand>
        <name>Mn(2+)</name>
        <dbReference type="ChEBI" id="CHEBI:29035"/>
        <label>1</label>
    </ligand>
</feature>
<feature type="binding site" evidence="2">
    <location>
        <position position="213"/>
    </location>
    <ligand>
        <name>Mn(2+)</name>
        <dbReference type="ChEBI" id="CHEBI:29035"/>
        <label>1</label>
    </ligand>
</feature>
<feature type="binding site" evidence="2">
    <location>
        <position position="213"/>
    </location>
    <ligand>
        <name>Mn(2+)</name>
        <dbReference type="ChEBI" id="CHEBI:29035"/>
        <label>2</label>
    </ligand>
</feature>
<feature type="binding site" evidence="2">
    <location>
        <position position="215"/>
    </location>
    <ligand>
        <name>Mn(2+)</name>
        <dbReference type="ChEBI" id="CHEBI:29035"/>
        <label>2</label>
    </ligand>
</feature>
<feature type="site" description="Important for catalytic activity" evidence="1">
    <location>
        <position position="144"/>
    </location>
</feature>